<reference key="1">
    <citation type="journal article" date="2009" name="BMC Genomics">
        <title>Metabolic analysis of the soil microbe Dechloromonas aromatica str. RCB: indications of a surprisingly complex life-style and cryptic anaerobic pathways for aromatic degradation.</title>
        <authorList>
            <person name="Salinero K.K."/>
            <person name="Keller K."/>
            <person name="Feil W.S."/>
            <person name="Feil H."/>
            <person name="Trong S."/>
            <person name="Di Bartolo G."/>
            <person name="Lapidus A."/>
        </authorList>
    </citation>
    <scope>NUCLEOTIDE SEQUENCE [LARGE SCALE GENOMIC DNA]</scope>
    <source>
        <strain>RCB</strain>
    </source>
</reference>
<evidence type="ECO:0000255" key="1">
    <source>
        <dbReference type="HAMAP-Rule" id="MF_00523"/>
    </source>
</evidence>
<organism>
    <name type="scientific">Dechloromonas aromatica (strain RCB)</name>
    <dbReference type="NCBI Taxonomy" id="159087"/>
    <lineage>
        <taxon>Bacteria</taxon>
        <taxon>Pseudomonadati</taxon>
        <taxon>Pseudomonadota</taxon>
        <taxon>Betaproteobacteria</taxon>
        <taxon>Rhodocyclales</taxon>
        <taxon>Azonexaceae</taxon>
        <taxon>Dechloromonas</taxon>
    </lineage>
</organism>
<proteinExistence type="inferred from homology"/>
<protein>
    <recommendedName>
        <fullName evidence="1">UDP-3-O-acylglucosamine N-acyltransferase</fullName>
        <ecNumber evidence="1">2.3.1.191</ecNumber>
    </recommendedName>
</protein>
<keyword id="KW-0012">Acyltransferase</keyword>
<keyword id="KW-0441">Lipid A biosynthesis</keyword>
<keyword id="KW-0444">Lipid biosynthesis</keyword>
<keyword id="KW-0443">Lipid metabolism</keyword>
<keyword id="KW-0677">Repeat</keyword>
<keyword id="KW-0808">Transferase</keyword>
<name>LPXD_DECAR</name>
<feature type="chain" id="PRO_0000264363" description="UDP-3-O-acylglucosamine N-acyltransferase">
    <location>
        <begin position="1"/>
        <end position="347"/>
    </location>
</feature>
<feature type="active site" description="Proton acceptor" evidence="1">
    <location>
        <position position="242"/>
    </location>
</feature>
<accession>Q47F82</accession>
<comment type="function">
    <text evidence="1">Catalyzes the N-acylation of UDP-3-O-acylglucosamine using 3-hydroxyacyl-ACP as the acyl donor. Is involved in the biosynthesis of lipid A, a phosphorylated glycolipid that anchors the lipopolysaccharide to the outer membrane of the cell.</text>
</comment>
<comment type="catalytic activity">
    <reaction evidence="1">
        <text>a UDP-3-O-[(3R)-3-hydroxyacyl]-alpha-D-glucosamine + a (3R)-hydroxyacyl-[ACP] = a UDP-2-N,3-O-bis[(3R)-3-hydroxyacyl]-alpha-D-glucosamine + holo-[ACP] + H(+)</text>
        <dbReference type="Rhea" id="RHEA:53836"/>
        <dbReference type="Rhea" id="RHEA-COMP:9685"/>
        <dbReference type="Rhea" id="RHEA-COMP:9945"/>
        <dbReference type="ChEBI" id="CHEBI:15378"/>
        <dbReference type="ChEBI" id="CHEBI:64479"/>
        <dbReference type="ChEBI" id="CHEBI:78827"/>
        <dbReference type="ChEBI" id="CHEBI:137740"/>
        <dbReference type="ChEBI" id="CHEBI:137748"/>
        <dbReference type="EC" id="2.3.1.191"/>
    </reaction>
</comment>
<comment type="pathway">
    <text evidence="1">Bacterial outer membrane biogenesis; LPS lipid A biosynthesis.</text>
</comment>
<comment type="subunit">
    <text evidence="1">Homotrimer.</text>
</comment>
<comment type="similarity">
    <text evidence="1">Belongs to the transferase hexapeptide repeat family. LpxD subfamily.</text>
</comment>
<gene>
    <name evidence="1" type="primary">lpxD</name>
    <name type="ordered locus">Daro_1752</name>
</gene>
<sequence>MASLGKVVLTLADIAAQLGGDVLGDSQTPISRVAPLATAGEGDITFLANPKFRSQLSACKASAVILRPDVAEEFPGPRIVTGNPYAYYARVATLLNPYQSGLSGVHASAVVESPVPDSVAIAPNVYIGKDVTLGENVVINAGCVIGDGVSIGAGTVLYANVTVYYGCSIGQQCIIHSGAVIGSDGFGFAPEGQSWIKIPQIGRVVIGNDVEIGANTTIDRGALEDTVIGDGCKLDNLVHIGHNCKIGNNSVLAGCTGVAGSTVFGEHCVVGGAGMISGHLNIAAGTTISGGTTVMKSILNPGVYTSVFPLDTHEEWLRNASHIRRLSKLAERVSELEKKLKEKDIEG</sequence>
<dbReference type="EC" id="2.3.1.191" evidence="1"/>
<dbReference type="EMBL" id="CP000089">
    <property type="protein sequence ID" value="AAZ46499.1"/>
    <property type="molecule type" value="Genomic_DNA"/>
</dbReference>
<dbReference type="SMR" id="Q47F82"/>
<dbReference type="STRING" id="159087.Daro_1752"/>
<dbReference type="KEGG" id="dar:Daro_1752"/>
<dbReference type="eggNOG" id="COG1044">
    <property type="taxonomic scope" value="Bacteria"/>
</dbReference>
<dbReference type="HOGENOM" id="CLU_049865_0_1_4"/>
<dbReference type="OrthoDB" id="9784739at2"/>
<dbReference type="UniPathway" id="UPA00973"/>
<dbReference type="GO" id="GO:0016020">
    <property type="term" value="C:membrane"/>
    <property type="evidence" value="ECO:0007669"/>
    <property type="project" value="GOC"/>
</dbReference>
<dbReference type="GO" id="GO:0016410">
    <property type="term" value="F:N-acyltransferase activity"/>
    <property type="evidence" value="ECO:0007669"/>
    <property type="project" value="InterPro"/>
</dbReference>
<dbReference type="GO" id="GO:0009245">
    <property type="term" value="P:lipid A biosynthetic process"/>
    <property type="evidence" value="ECO:0007669"/>
    <property type="project" value="UniProtKB-UniRule"/>
</dbReference>
<dbReference type="CDD" id="cd03352">
    <property type="entry name" value="LbH_LpxD"/>
    <property type="match status" value="1"/>
</dbReference>
<dbReference type="Gene3D" id="1.20.5.170">
    <property type="match status" value="1"/>
</dbReference>
<dbReference type="Gene3D" id="2.160.10.10">
    <property type="entry name" value="Hexapeptide repeat proteins"/>
    <property type="match status" value="1"/>
</dbReference>
<dbReference type="Gene3D" id="3.40.1390.10">
    <property type="entry name" value="MurE/MurF, N-terminal domain"/>
    <property type="match status" value="1"/>
</dbReference>
<dbReference type="HAMAP" id="MF_00523">
    <property type="entry name" value="LpxD"/>
    <property type="match status" value="1"/>
</dbReference>
<dbReference type="InterPro" id="IPR001451">
    <property type="entry name" value="Hexapep"/>
</dbReference>
<dbReference type="InterPro" id="IPR018357">
    <property type="entry name" value="Hexapep_transf_CS"/>
</dbReference>
<dbReference type="InterPro" id="IPR007691">
    <property type="entry name" value="LpxD"/>
</dbReference>
<dbReference type="InterPro" id="IPR011004">
    <property type="entry name" value="Trimer_LpxA-like_sf"/>
</dbReference>
<dbReference type="InterPro" id="IPR020573">
    <property type="entry name" value="UDP_GlcNAc_AcTrfase_non-rep"/>
</dbReference>
<dbReference type="NCBIfam" id="TIGR01853">
    <property type="entry name" value="lipid_A_lpxD"/>
    <property type="match status" value="1"/>
</dbReference>
<dbReference type="NCBIfam" id="NF002060">
    <property type="entry name" value="PRK00892.1"/>
    <property type="match status" value="1"/>
</dbReference>
<dbReference type="PANTHER" id="PTHR43378">
    <property type="entry name" value="UDP-3-O-ACYLGLUCOSAMINE N-ACYLTRANSFERASE"/>
    <property type="match status" value="1"/>
</dbReference>
<dbReference type="PANTHER" id="PTHR43378:SF2">
    <property type="entry name" value="UDP-3-O-ACYLGLUCOSAMINE N-ACYLTRANSFERASE 1, MITOCHONDRIAL-RELATED"/>
    <property type="match status" value="1"/>
</dbReference>
<dbReference type="Pfam" id="PF00132">
    <property type="entry name" value="Hexapep"/>
    <property type="match status" value="2"/>
</dbReference>
<dbReference type="Pfam" id="PF04613">
    <property type="entry name" value="LpxD"/>
    <property type="match status" value="1"/>
</dbReference>
<dbReference type="SUPFAM" id="SSF51161">
    <property type="entry name" value="Trimeric LpxA-like enzymes"/>
    <property type="match status" value="1"/>
</dbReference>
<dbReference type="PROSITE" id="PS00101">
    <property type="entry name" value="HEXAPEP_TRANSFERASES"/>
    <property type="match status" value="1"/>
</dbReference>